<proteinExistence type="inferred from homology"/>
<reference key="1">
    <citation type="journal article" date="2010" name="J. Bacteriol.">
        <title>Genome sequence of the dioxin-mineralizing bacterium Sphingomonas wittichii RW1.</title>
        <authorList>
            <person name="Miller T.R."/>
            <person name="Delcher A.L."/>
            <person name="Salzberg S.L."/>
            <person name="Saunders E."/>
            <person name="Detter J.C."/>
            <person name="Halden R.U."/>
        </authorList>
    </citation>
    <scope>NUCLEOTIDE SEQUENCE [LARGE SCALE GENOMIC DNA]</scope>
    <source>
        <strain>DSM 6014 / CCUG 31198 / JCM 15750 / NBRC 105917 / EY 4224 / RW1</strain>
    </source>
</reference>
<sequence length="187" mass="20806">MGVTLDSALNPHKPEGFGEVVAPDPDYFKALQAEVNDKGFLVTSAEELFQWARTGSLWWMTFGLACCAVEMIHVNMPRYDLERFGAAPRASPRQSDVMIVAGTLCNKMAPALRRVYDQMSEPKYVISMGSCANGGGYYHYSYSVVRGCDRIVPVDIYVPGCPPTAEALLYGIMQLQRKIRRIGTLER</sequence>
<evidence type="ECO:0000250" key="1"/>
<evidence type="ECO:0000255" key="2">
    <source>
        <dbReference type="HAMAP-Rule" id="MF_01356"/>
    </source>
</evidence>
<gene>
    <name evidence="2" type="primary">nuoB</name>
    <name type="ordered locus">Swit_2983</name>
</gene>
<name>NUOB_RHIWR</name>
<accession>A5VAL8</accession>
<keyword id="KW-0004">4Fe-4S</keyword>
<keyword id="KW-0997">Cell inner membrane</keyword>
<keyword id="KW-1003">Cell membrane</keyword>
<keyword id="KW-0408">Iron</keyword>
<keyword id="KW-0411">Iron-sulfur</keyword>
<keyword id="KW-0472">Membrane</keyword>
<keyword id="KW-0479">Metal-binding</keyword>
<keyword id="KW-0520">NAD</keyword>
<keyword id="KW-0874">Quinone</keyword>
<keyword id="KW-1185">Reference proteome</keyword>
<keyword id="KW-1278">Translocase</keyword>
<keyword id="KW-0813">Transport</keyword>
<keyword id="KW-0830">Ubiquinone</keyword>
<comment type="function">
    <text evidence="1">NDH-1 shuttles electrons from NADH, via FMN and iron-sulfur (Fe-S) centers, to quinones in the respiratory chain. Couples the redox reaction to proton translocation (for every two electrons transferred, four hydrogen ions are translocated across the cytoplasmic membrane), and thus conserves the redox energy in a proton gradient (By similarity).</text>
</comment>
<comment type="catalytic activity">
    <reaction evidence="2">
        <text>a quinone + NADH + 5 H(+)(in) = a quinol + NAD(+) + 4 H(+)(out)</text>
        <dbReference type="Rhea" id="RHEA:57888"/>
        <dbReference type="ChEBI" id="CHEBI:15378"/>
        <dbReference type="ChEBI" id="CHEBI:24646"/>
        <dbReference type="ChEBI" id="CHEBI:57540"/>
        <dbReference type="ChEBI" id="CHEBI:57945"/>
        <dbReference type="ChEBI" id="CHEBI:132124"/>
    </reaction>
</comment>
<comment type="cofactor">
    <cofactor evidence="2">
        <name>[4Fe-4S] cluster</name>
        <dbReference type="ChEBI" id="CHEBI:49883"/>
    </cofactor>
    <text evidence="2">Binds 1 [4Fe-4S] cluster.</text>
</comment>
<comment type="subunit">
    <text evidence="2">NDH-1 is composed of 14 different subunits. Subunits NuoB, C, D, E, F, and G constitute the peripheral sector of the complex.</text>
</comment>
<comment type="subcellular location">
    <subcellularLocation>
        <location evidence="2">Cell inner membrane</location>
        <topology evidence="2">Peripheral membrane protein</topology>
        <orientation evidence="2">Cytoplasmic side</orientation>
    </subcellularLocation>
</comment>
<comment type="similarity">
    <text evidence="2">Belongs to the complex I 20 kDa subunit family.</text>
</comment>
<organism>
    <name type="scientific">Rhizorhabdus wittichii (strain DSM 6014 / CCUG 31198 / JCM 15750 / NBRC 105917 / EY 4224 / RW1)</name>
    <name type="common">Sphingomonas wittichii</name>
    <dbReference type="NCBI Taxonomy" id="392499"/>
    <lineage>
        <taxon>Bacteria</taxon>
        <taxon>Pseudomonadati</taxon>
        <taxon>Pseudomonadota</taxon>
        <taxon>Alphaproteobacteria</taxon>
        <taxon>Sphingomonadales</taxon>
        <taxon>Sphingomonadaceae</taxon>
        <taxon>Rhizorhabdus</taxon>
    </lineage>
</organism>
<dbReference type="EC" id="7.1.1.-" evidence="2"/>
<dbReference type="EMBL" id="CP000699">
    <property type="protein sequence ID" value="ABQ69334.1"/>
    <property type="molecule type" value="Genomic_DNA"/>
</dbReference>
<dbReference type="SMR" id="A5VAL8"/>
<dbReference type="STRING" id="392499.Swit_2983"/>
<dbReference type="PaxDb" id="392499-Swit_2983"/>
<dbReference type="KEGG" id="swi:Swit_2983"/>
<dbReference type="eggNOG" id="COG0377">
    <property type="taxonomic scope" value="Bacteria"/>
</dbReference>
<dbReference type="HOGENOM" id="CLU_055737_7_0_5"/>
<dbReference type="OrthoDB" id="9786737at2"/>
<dbReference type="Proteomes" id="UP000001989">
    <property type="component" value="Chromosome"/>
</dbReference>
<dbReference type="GO" id="GO:0005886">
    <property type="term" value="C:plasma membrane"/>
    <property type="evidence" value="ECO:0007669"/>
    <property type="project" value="UniProtKB-SubCell"/>
</dbReference>
<dbReference type="GO" id="GO:0045271">
    <property type="term" value="C:respiratory chain complex I"/>
    <property type="evidence" value="ECO:0007669"/>
    <property type="project" value="TreeGrafter"/>
</dbReference>
<dbReference type="GO" id="GO:0051539">
    <property type="term" value="F:4 iron, 4 sulfur cluster binding"/>
    <property type="evidence" value="ECO:0007669"/>
    <property type="project" value="UniProtKB-KW"/>
</dbReference>
<dbReference type="GO" id="GO:0005506">
    <property type="term" value="F:iron ion binding"/>
    <property type="evidence" value="ECO:0007669"/>
    <property type="project" value="UniProtKB-UniRule"/>
</dbReference>
<dbReference type="GO" id="GO:0008137">
    <property type="term" value="F:NADH dehydrogenase (ubiquinone) activity"/>
    <property type="evidence" value="ECO:0007669"/>
    <property type="project" value="InterPro"/>
</dbReference>
<dbReference type="GO" id="GO:0050136">
    <property type="term" value="F:NADH:ubiquinone reductase (non-electrogenic) activity"/>
    <property type="evidence" value="ECO:0007669"/>
    <property type="project" value="UniProtKB-UniRule"/>
</dbReference>
<dbReference type="GO" id="GO:0048038">
    <property type="term" value="F:quinone binding"/>
    <property type="evidence" value="ECO:0007669"/>
    <property type="project" value="UniProtKB-KW"/>
</dbReference>
<dbReference type="GO" id="GO:0009060">
    <property type="term" value="P:aerobic respiration"/>
    <property type="evidence" value="ECO:0007669"/>
    <property type="project" value="TreeGrafter"/>
</dbReference>
<dbReference type="GO" id="GO:0015990">
    <property type="term" value="P:electron transport coupled proton transport"/>
    <property type="evidence" value="ECO:0007669"/>
    <property type="project" value="TreeGrafter"/>
</dbReference>
<dbReference type="FunFam" id="3.40.50.12280:FF:000001">
    <property type="entry name" value="NADH-quinone oxidoreductase subunit B 2"/>
    <property type="match status" value="1"/>
</dbReference>
<dbReference type="Gene3D" id="3.40.50.12280">
    <property type="match status" value="1"/>
</dbReference>
<dbReference type="HAMAP" id="MF_01356">
    <property type="entry name" value="NDH1_NuoB"/>
    <property type="match status" value="1"/>
</dbReference>
<dbReference type="InterPro" id="IPR006137">
    <property type="entry name" value="NADH_UbQ_OxRdtase-like_20kDa"/>
</dbReference>
<dbReference type="InterPro" id="IPR006138">
    <property type="entry name" value="NADH_UQ_OxRdtase_20Kd_su"/>
</dbReference>
<dbReference type="NCBIfam" id="TIGR01957">
    <property type="entry name" value="nuoB_fam"/>
    <property type="match status" value="1"/>
</dbReference>
<dbReference type="NCBIfam" id="NF005012">
    <property type="entry name" value="PRK06411.1"/>
    <property type="match status" value="1"/>
</dbReference>
<dbReference type="PANTHER" id="PTHR11995">
    <property type="entry name" value="NADH DEHYDROGENASE"/>
    <property type="match status" value="1"/>
</dbReference>
<dbReference type="PANTHER" id="PTHR11995:SF14">
    <property type="entry name" value="NADH DEHYDROGENASE [UBIQUINONE] IRON-SULFUR PROTEIN 7, MITOCHONDRIAL"/>
    <property type="match status" value="1"/>
</dbReference>
<dbReference type="Pfam" id="PF01058">
    <property type="entry name" value="Oxidored_q6"/>
    <property type="match status" value="1"/>
</dbReference>
<dbReference type="SUPFAM" id="SSF56770">
    <property type="entry name" value="HydA/Nqo6-like"/>
    <property type="match status" value="1"/>
</dbReference>
<dbReference type="PROSITE" id="PS01150">
    <property type="entry name" value="COMPLEX1_20K"/>
    <property type="match status" value="1"/>
</dbReference>
<protein>
    <recommendedName>
        <fullName evidence="2">NADH-quinone oxidoreductase subunit B</fullName>
        <ecNumber evidence="2">7.1.1.-</ecNumber>
    </recommendedName>
    <alternativeName>
        <fullName evidence="2">NADH dehydrogenase I subunit B</fullName>
    </alternativeName>
    <alternativeName>
        <fullName evidence="2">NDH-1 subunit B</fullName>
    </alternativeName>
</protein>
<feature type="chain" id="PRO_0000358482" description="NADH-quinone oxidoreductase subunit B">
    <location>
        <begin position="1"/>
        <end position="187"/>
    </location>
</feature>
<feature type="binding site" evidence="2">
    <location>
        <position position="66"/>
    </location>
    <ligand>
        <name>[4Fe-4S] cluster</name>
        <dbReference type="ChEBI" id="CHEBI:49883"/>
    </ligand>
</feature>
<feature type="binding site" evidence="2">
    <location>
        <position position="67"/>
    </location>
    <ligand>
        <name>[4Fe-4S] cluster</name>
        <dbReference type="ChEBI" id="CHEBI:49883"/>
    </ligand>
</feature>
<feature type="binding site" evidence="2">
    <location>
        <position position="131"/>
    </location>
    <ligand>
        <name>[4Fe-4S] cluster</name>
        <dbReference type="ChEBI" id="CHEBI:49883"/>
    </ligand>
</feature>
<feature type="binding site" evidence="2">
    <location>
        <position position="161"/>
    </location>
    <ligand>
        <name>[4Fe-4S] cluster</name>
        <dbReference type="ChEBI" id="CHEBI:49883"/>
    </ligand>
</feature>